<proteinExistence type="inferred from homology"/>
<evidence type="ECO:0000255" key="1">
    <source>
        <dbReference type="HAMAP-Rule" id="MF_00227"/>
    </source>
</evidence>
<protein>
    <recommendedName>
        <fullName evidence="1">Ribonuclease P protein component</fullName>
        <shortName evidence="1">RNase P protein</shortName>
        <shortName evidence="1">RNaseP protein</shortName>
        <ecNumber evidence="1">3.1.26.5</ecNumber>
    </recommendedName>
    <alternativeName>
        <fullName evidence="1">Protein C5</fullName>
    </alternativeName>
</protein>
<sequence>MVKLAFPRELRLLTPSHFTFVFQQPQRAGTPQITILGRLNELGHPRIGLTVAKKHVKRAHERNRIKRLARESFRLHQHTLPSMDFVVLVKKGVADLDNRALTEALEKLWRRHCRQAPAS</sequence>
<keyword id="KW-0255">Endonuclease</keyword>
<keyword id="KW-0378">Hydrolase</keyword>
<keyword id="KW-0540">Nuclease</keyword>
<keyword id="KW-0694">RNA-binding</keyword>
<keyword id="KW-0819">tRNA processing</keyword>
<dbReference type="EC" id="3.1.26.5" evidence="1"/>
<dbReference type="EMBL" id="AM286415">
    <property type="protein sequence ID" value="CAL14192.1"/>
    <property type="molecule type" value="Genomic_DNA"/>
</dbReference>
<dbReference type="RefSeq" id="WP_005161101.1">
    <property type="nucleotide sequence ID" value="NC_008800.1"/>
</dbReference>
<dbReference type="RefSeq" id="YP_001008310.1">
    <property type="nucleotide sequence ID" value="NC_008800.1"/>
</dbReference>
<dbReference type="SMR" id="A1JT84"/>
<dbReference type="GeneID" id="97458396"/>
<dbReference type="KEGG" id="yen:YE4176"/>
<dbReference type="PATRIC" id="fig|393305.7.peg.4443"/>
<dbReference type="eggNOG" id="COG0594">
    <property type="taxonomic scope" value="Bacteria"/>
</dbReference>
<dbReference type="HOGENOM" id="CLU_117179_11_0_6"/>
<dbReference type="OrthoDB" id="9796422at2"/>
<dbReference type="Proteomes" id="UP000000642">
    <property type="component" value="Chromosome"/>
</dbReference>
<dbReference type="GO" id="GO:0030677">
    <property type="term" value="C:ribonuclease P complex"/>
    <property type="evidence" value="ECO:0007669"/>
    <property type="project" value="TreeGrafter"/>
</dbReference>
<dbReference type="GO" id="GO:0042781">
    <property type="term" value="F:3'-tRNA processing endoribonuclease activity"/>
    <property type="evidence" value="ECO:0007669"/>
    <property type="project" value="TreeGrafter"/>
</dbReference>
<dbReference type="GO" id="GO:0004526">
    <property type="term" value="F:ribonuclease P activity"/>
    <property type="evidence" value="ECO:0007669"/>
    <property type="project" value="UniProtKB-UniRule"/>
</dbReference>
<dbReference type="GO" id="GO:0000049">
    <property type="term" value="F:tRNA binding"/>
    <property type="evidence" value="ECO:0007669"/>
    <property type="project" value="UniProtKB-UniRule"/>
</dbReference>
<dbReference type="GO" id="GO:0001682">
    <property type="term" value="P:tRNA 5'-leader removal"/>
    <property type="evidence" value="ECO:0007669"/>
    <property type="project" value="UniProtKB-UniRule"/>
</dbReference>
<dbReference type="FunFam" id="3.30.230.10:FF:000016">
    <property type="entry name" value="Ribonuclease P protein component"/>
    <property type="match status" value="1"/>
</dbReference>
<dbReference type="Gene3D" id="3.30.230.10">
    <property type="match status" value="1"/>
</dbReference>
<dbReference type="HAMAP" id="MF_00227">
    <property type="entry name" value="RNase_P"/>
    <property type="match status" value="1"/>
</dbReference>
<dbReference type="InterPro" id="IPR020568">
    <property type="entry name" value="Ribosomal_Su5_D2-typ_SF"/>
</dbReference>
<dbReference type="InterPro" id="IPR014721">
    <property type="entry name" value="Ribsml_uS5_D2-typ_fold_subgr"/>
</dbReference>
<dbReference type="InterPro" id="IPR000100">
    <property type="entry name" value="RNase_P"/>
</dbReference>
<dbReference type="InterPro" id="IPR020539">
    <property type="entry name" value="RNase_P_CS"/>
</dbReference>
<dbReference type="NCBIfam" id="TIGR00188">
    <property type="entry name" value="rnpA"/>
    <property type="match status" value="1"/>
</dbReference>
<dbReference type="PANTHER" id="PTHR33992">
    <property type="entry name" value="RIBONUCLEASE P PROTEIN COMPONENT"/>
    <property type="match status" value="1"/>
</dbReference>
<dbReference type="PANTHER" id="PTHR33992:SF1">
    <property type="entry name" value="RIBONUCLEASE P PROTEIN COMPONENT"/>
    <property type="match status" value="1"/>
</dbReference>
<dbReference type="Pfam" id="PF00825">
    <property type="entry name" value="Ribonuclease_P"/>
    <property type="match status" value="1"/>
</dbReference>
<dbReference type="SUPFAM" id="SSF54211">
    <property type="entry name" value="Ribosomal protein S5 domain 2-like"/>
    <property type="match status" value="1"/>
</dbReference>
<dbReference type="PROSITE" id="PS00648">
    <property type="entry name" value="RIBONUCLEASE_P"/>
    <property type="match status" value="1"/>
</dbReference>
<gene>
    <name evidence="1" type="primary">rnpA</name>
    <name type="ordered locus">YE4176</name>
</gene>
<accession>A1JT84</accession>
<name>RNPA_YERE8</name>
<organism>
    <name type="scientific">Yersinia enterocolitica serotype O:8 / biotype 1B (strain NCTC 13174 / 8081)</name>
    <dbReference type="NCBI Taxonomy" id="393305"/>
    <lineage>
        <taxon>Bacteria</taxon>
        <taxon>Pseudomonadati</taxon>
        <taxon>Pseudomonadota</taxon>
        <taxon>Gammaproteobacteria</taxon>
        <taxon>Enterobacterales</taxon>
        <taxon>Yersiniaceae</taxon>
        <taxon>Yersinia</taxon>
    </lineage>
</organism>
<reference key="1">
    <citation type="journal article" date="2006" name="PLoS Genet.">
        <title>The complete genome sequence and comparative genome analysis of the high pathogenicity Yersinia enterocolitica strain 8081.</title>
        <authorList>
            <person name="Thomson N.R."/>
            <person name="Howard S."/>
            <person name="Wren B.W."/>
            <person name="Holden M.T.G."/>
            <person name="Crossman L."/>
            <person name="Challis G.L."/>
            <person name="Churcher C."/>
            <person name="Mungall K."/>
            <person name="Brooks K."/>
            <person name="Chillingworth T."/>
            <person name="Feltwell T."/>
            <person name="Abdellah Z."/>
            <person name="Hauser H."/>
            <person name="Jagels K."/>
            <person name="Maddison M."/>
            <person name="Moule S."/>
            <person name="Sanders M."/>
            <person name="Whitehead S."/>
            <person name="Quail M.A."/>
            <person name="Dougan G."/>
            <person name="Parkhill J."/>
            <person name="Prentice M.B."/>
        </authorList>
    </citation>
    <scope>NUCLEOTIDE SEQUENCE [LARGE SCALE GENOMIC DNA]</scope>
    <source>
        <strain>NCTC 13174 / 8081</strain>
    </source>
</reference>
<feature type="chain" id="PRO_1000021493" description="Ribonuclease P protein component">
    <location>
        <begin position="1"/>
        <end position="119"/>
    </location>
</feature>
<comment type="function">
    <text evidence="1">RNaseP catalyzes the removal of the 5'-leader sequence from pre-tRNA to produce the mature 5'-terminus. It can also cleave other RNA substrates such as 4.5S RNA. The protein component plays an auxiliary but essential role in vivo by binding to the 5'-leader sequence and broadening the substrate specificity of the ribozyme.</text>
</comment>
<comment type="catalytic activity">
    <reaction evidence="1">
        <text>Endonucleolytic cleavage of RNA, removing 5'-extranucleotides from tRNA precursor.</text>
        <dbReference type="EC" id="3.1.26.5"/>
    </reaction>
</comment>
<comment type="subunit">
    <text evidence="1">Consists of a catalytic RNA component (M1 or rnpB) and a protein subunit.</text>
</comment>
<comment type="similarity">
    <text evidence="1">Belongs to the RnpA family.</text>
</comment>